<keyword id="KW-1185">Reference proteome</keyword>
<keyword id="KW-0687">Ribonucleoprotein</keyword>
<keyword id="KW-0689">Ribosomal protein</keyword>
<reference key="1">
    <citation type="journal article" date="2004" name="Science">
        <title>A predator unmasked: life cycle of Bdellovibrio bacteriovorus from a genomic perspective.</title>
        <authorList>
            <person name="Rendulic S."/>
            <person name="Jagtap P."/>
            <person name="Rosinus A."/>
            <person name="Eppinger M."/>
            <person name="Baar C."/>
            <person name="Lanz C."/>
            <person name="Keller H."/>
            <person name="Lambert C."/>
            <person name="Evans K.J."/>
            <person name="Goesmann A."/>
            <person name="Meyer F."/>
            <person name="Sockett R.E."/>
            <person name="Schuster S.C."/>
        </authorList>
    </citation>
    <scope>NUCLEOTIDE SEQUENCE [LARGE SCALE GENOMIC DNA]</scope>
    <source>
        <strain>ATCC 15356 / DSM 50701 / NCIMB 9529 / HD100</strain>
    </source>
</reference>
<organism>
    <name type="scientific">Bdellovibrio bacteriovorus (strain ATCC 15356 / DSM 50701 / NCIMB 9529 / HD100)</name>
    <dbReference type="NCBI Taxonomy" id="264462"/>
    <lineage>
        <taxon>Bacteria</taxon>
        <taxon>Pseudomonadati</taxon>
        <taxon>Bdellovibrionota</taxon>
        <taxon>Bdellovibrionia</taxon>
        <taxon>Bdellovibrionales</taxon>
        <taxon>Pseudobdellovibrionaceae</taxon>
        <taxon>Bdellovibrio</taxon>
    </lineage>
</organism>
<accession>Q6MJ22</accession>
<dbReference type="EMBL" id="BX842654">
    <property type="protein sequence ID" value="CAE80740.1"/>
    <property type="molecule type" value="Genomic_DNA"/>
</dbReference>
<dbReference type="RefSeq" id="WP_011165344.1">
    <property type="nucleotide sequence ID" value="NC_005363.1"/>
</dbReference>
<dbReference type="SMR" id="Q6MJ22"/>
<dbReference type="STRING" id="264462.Bd2968"/>
<dbReference type="GeneID" id="93013831"/>
<dbReference type="KEGG" id="bba:Bd2968"/>
<dbReference type="eggNOG" id="COG0255">
    <property type="taxonomic scope" value="Bacteria"/>
</dbReference>
<dbReference type="HOGENOM" id="CLU_158491_5_2_7"/>
<dbReference type="Proteomes" id="UP000008080">
    <property type="component" value="Chromosome"/>
</dbReference>
<dbReference type="GO" id="GO:1990904">
    <property type="term" value="C:ribonucleoprotein complex"/>
    <property type="evidence" value="ECO:0007669"/>
    <property type="project" value="UniProtKB-KW"/>
</dbReference>
<dbReference type="GO" id="GO:0005840">
    <property type="term" value="C:ribosome"/>
    <property type="evidence" value="ECO:0007669"/>
    <property type="project" value="UniProtKB-KW"/>
</dbReference>
<dbReference type="GO" id="GO:0003735">
    <property type="term" value="F:structural constituent of ribosome"/>
    <property type="evidence" value="ECO:0007669"/>
    <property type="project" value="InterPro"/>
</dbReference>
<dbReference type="GO" id="GO:0006412">
    <property type="term" value="P:translation"/>
    <property type="evidence" value="ECO:0007669"/>
    <property type="project" value="UniProtKB-UniRule"/>
</dbReference>
<dbReference type="CDD" id="cd00427">
    <property type="entry name" value="Ribosomal_L29_HIP"/>
    <property type="match status" value="1"/>
</dbReference>
<dbReference type="Gene3D" id="1.10.287.310">
    <property type="match status" value="1"/>
</dbReference>
<dbReference type="HAMAP" id="MF_00374">
    <property type="entry name" value="Ribosomal_uL29"/>
    <property type="match status" value="1"/>
</dbReference>
<dbReference type="InterPro" id="IPR001854">
    <property type="entry name" value="Ribosomal_uL29"/>
</dbReference>
<dbReference type="InterPro" id="IPR018254">
    <property type="entry name" value="Ribosomal_uL29_CS"/>
</dbReference>
<dbReference type="InterPro" id="IPR036049">
    <property type="entry name" value="Ribosomal_uL29_sf"/>
</dbReference>
<dbReference type="NCBIfam" id="TIGR00012">
    <property type="entry name" value="L29"/>
    <property type="match status" value="1"/>
</dbReference>
<dbReference type="Pfam" id="PF00831">
    <property type="entry name" value="Ribosomal_L29"/>
    <property type="match status" value="1"/>
</dbReference>
<dbReference type="SUPFAM" id="SSF46561">
    <property type="entry name" value="Ribosomal protein L29 (L29p)"/>
    <property type="match status" value="1"/>
</dbReference>
<dbReference type="PROSITE" id="PS00579">
    <property type="entry name" value="RIBOSOMAL_L29"/>
    <property type="match status" value="1"/>
</dbReference>
<evidence type="ECO:0000255" key="1">
    <source>
        <dbReference type="HAMAP-Rule" id="MF_00374"/>
    </source>
</evidence>
<evidence type="ECO:0000305" key="2"/>
<proteinExistence type="inferred from homology"/>
<feature type="chain" id="PRO_0000130359" description="Large ribosomal subunit protein uL29">
    <location>
        <begin position="1"/>
        <end position="63"/>
    </location>
</feature>
<sequence>MKFVEIKDLSVAELKKKRAALSEELFQARIKNSIGQLSNPVQIRGLRRDIAKINTAIVKKVAR</sequence>
<protein>
    <recommendedName>
        <fullName evidence="1">Large ribosomal subunit protein uL29</fullName>
    </recommendedName>
    <alternativeName>
        <fullName evidence="2">50S ribosomal protein L29</fullName>
    </alternativeName>
</protein>
<gene>
    <name evidence="1" type="primary">rpmC</name>
    <name type="ordered locus">Bd2968</name>
</gene>
<name>RL29_BDEBA</name>
<comment type="similarity">
    <text evidence="1">Belongs to the universal ribosomal protein uL29 family.</text>
</comment>